<sequence>MSIVIGADAAGLRLKEVVKDFLEKENFHLVDVTAEGQDFVDVTLAVAAEVNKEEQNLGIVIDAYGAGPFMVATKIKGMVAAEVSDERSAYMTRGHNNSRMITMGAQLVGDELAKNIAKGFVNGKYDGGRHQIRVDMLNKMG</sequence>
<feature type="chain" id="PRO_1000185399" description="Galactose-6-phosphate isomerase subunit LacA">
    <location>
        <begin position="1"/>
        <end position="141"/>
    </location>
</feature>
<proteinExistence type="inferred from homology"/>
<name>LACA_STRZJ</name>
<gene>
    <name evidence="1" type="primary">lacA</name>
    <name type="ordered locus">SPJ_1109</name>
</gene>
<organism>
    <name type="scientific">Streptococcus pneumoniae (strain JJA)</name>
    <dbReference type="NCBI Taxonomy" id="488222"/>
    <lineage>
        <taxon>Bacteria</taxon>
        <taxon>Bacillati</taxon>
        <taxon>Bacillota</taxon>
        <taxon>Bacilli</taxon>
        <taxon>Lactobacillales</taxon>
        <taxon>Streptococcaceae</taxon>
        <taxon>Streptococcus</taxon>
    </lineage>
</organism>
<keyword id="KW-0413">Isomerase</keyword>
<keyword id="KW-0423">Lactose metabolism</keyword>
<accession>C1CEF4</accession>
<reference key="1">
    <citation type="journal article" date="2010" name="Genome Biol.">
        <title>Structure and dynamics of the pan-genome of Streptococcus pneumoniae and closely related species.</title>
        <authorList>
            <person name="Donati C."/>
            <person name="Hiller N.L."/>
            <person name="Tettelin H."/>
            <person name="Muzzi A."/>
            <person name="Croucher N.J."/>
            <person name="Angiuoli S.V."/>
            <person name="Oggioni M."/>
            <person name="Dunning Hotopp J.C."/>
            <person name="Hu F.Z."/>
            <person name="Riley D.R."/>
            <person name="Covacci A."/>
            <person name="Mitchell T.J."/>
            <person name="Bentley S.D."/>
            <person name="Kilian M."/>
            <person name="Ehrlich G.D."/>
            <person name="Rappuoli R."/>
            <person name="Moxon E.R."/>
            <person name="Masignani V."/>
        </authorList>
    </citation>
    <scope>NUCLEOTIDE SEQUENCE [LARGE SCALE GENOMIC DNA]</scope>
    <source>
        <strain>JJA</strain>
    </source>
</reference>
<evidence type="ECO:0000255" key="1">
    <source>
        <dbReference type="HAMAP-Rule" id="MF_01555"/>
    </source>
</evidence>
<protein>
    <recommendedName>
        <fullName evidence="1">Galactose-6-phosphate isomerase subunit LacA</fullName>
        <ecNumber evidence="1">5.3.1.26</ecNumber>
    </recommendedName>
</protein>
<comment type="catalytic activity">
    <reaction evidence="1">
        <text>aldehydo-D-galactose 6-phosphate = keto-D-tagatose 6-phosphate</text>
        <dbReference type="Rhea" id="RHEA:13033"/>
        <dbReference type="ChEBI" id="CHEBI:58255"/>
        <dbReference type="ChEBI" id="CHEBI:134283"/>
        <dbReference type="EC" id="5.3.1.26"/>
    </reaction>
</comment>
<comment type="pathway">
    <text evidence="1">Carbohydrate metabolism; D-galactose 6-phosphate degradation; D-tagatose 6-phosphate from D-galactose 6-phosphate: step 1/1.</text>
</comment>
<comment type="subunit">
    <text evidence="1">Heteromultimeric protein consisting of LacA and LacB.</text>
</comment>
<comment type="similarity">
    <text evidence="1">Belongs to the LacAB/RpiB family.</text>
</comment>
<dbReference type="EC" id="5.3.1.26" evidence="1"/>
<dbReference type="EMBL" id="CP000919">
    <property type="protein sequence ID" value="ACO19458.1"/>
    <property type="molecule type" value="Genomic_DNA"/>
</dbReference>
<dbReference type="RefSeq" id="WP_000029272.1">
    <property type="nucleotide sequence ID" value="NC_012466.1"/>
</dbReference>
<dbReference type="SMR" id="C1CEF4"/>
<dbReference type="GeneID" id="45653585"/>
<dbReference type="KEGG" id="sjj:SPJ_1109"/>
<dbReference type="HOGENOM" id="CLU_091396_4_2_9"/>
<dbReference type="UniPathway" id="UPA00702">
    <property type="reaction ID" value="UER00714"/>
</dbReference>
<dbReference type="Proteomes" id="UP000002206">
    <property type="component" value="Chromosome"/>
</dbReference>
<dbReference type="GO" id="GO:0050044">
    <property type="term" value="F:galactose-6-phosphate isomerase activity"/>
    <property type="evidence" value="ECO:0007669"/>
    <property type="project" value="UniProtKB-UniRule"/>
</dbReference>
<dbReference type="GO" id="GO:0004751">
    <property type="term" value="F:ribose-5-phosphate isomerase activity"/>
    <property type="evidence" value="ECO:0007669"/>
    <property type="project" value="TreeGrafter"/>
</dbReference>
<dbReference type="GO" id="GO:0019316">
    <property type="term" value="P:D-allose catabolic process"/>
    <property type="evidence" value="ECO:0007669"/>
    <property type="project" value="TreeGrafter"/>
</dbReference>
<dbReference type="GO" id="GO:0019388">
    <property type="term" value="P:galactose catabolic process"/>
    <property type="evidence" value="ECO:0007669"/>
    <property type="project" value="UniProtKB-UniPathway"/>
</dbReference>
<dbReference type="GO" id="GO:0019512">
    <property type="term" value="P:lactose catabolic process via tagatose-6-phosphate"/>
    <property type="evidence" value="ECO:0007669"/>
    <property type="project" value="UniProtKB-UniRule"/>
</dbReference>
<dbReference type="GO" id="GO:0009052">
    <property type="term" value="P:pentose-phosphate shunt, non-oxidative branch"/>
    <property type="evidence" value="ECO:0007669"/>
    <property type="project" value="TreeGrafter"/>
</dbReference>
<dbReference type="Gene3D" id="3.40.1400.10">
    <property type="entry name" value="Sugar-phosphate isomerase, RpiB/LacA/LacB"/>
    <property type="match status" value="1"/>
</dbReference>
<dbReference type="HAMAP" id="MF_01555">
    <property type="entry name" value="LacA"/>
    <property type="match status" value="1"/>
</dbReference>
<dbReference type="InterPro" id="IPR004783">
    <property type="entry name" value="LacA"/>
</dbReference>
<dbReference type="InterPro" id="IPR003500">
    <property type="entry name" value="RpiB_LacA_LacB"/>
</dbReference>
<dbReference type="InterPro" id="IPR036569">
    <property type="entry name" value="RpiB_LacA_LacB_sf"/>
</dbReference>
<dbReference type="NCBIfam" id="TIGR01118">
    <property type="entry name" value="lacA"/>
    <property type="match status" value="1"/>
</dbReference>
<dbReference type="NCBIfam" id="NF006380">
    <property type="entry name" value="PRK08621.1"/>
    <property type="match status" value="1"/>
</dbReference>
<dbReference type="NCBIfam" id="NF009257">
    <property type="entry name" value="PRK12613.1"/>
    <property type="match status" value="1"/>
</dbReference>
<dbReference type="NCBIfam" id="TIGR00689">
    <property type="entry name" value="rpiB_lacA_lacB"/>
    <property type="match status" value="1"/>
</dbReference>
<dbReference type="PANTHER" id="PTHR30345:SF5">
    <property type="entry name" value="GALACTOSE-6-PHOSPHATE ISOMERASE SUBUNIT LACA"/>
    <property type="match status" value="1"/>
</dbReference>
<dbReference type="PANTHER" id="PTHR30345">
    <property type="entry name" value="RIBOSE-5-PHOSPHATE ISOMERASE B"/>
    <property type="match status" value="1"/>
</dbReference>
<dbReference type="Pfam" id="PF02502">
    <property type="entry name" value="LacAB_rpiB"/>
    <property type="match status" value="1"/>
</dbReference>
<dbReference type="PIRSF" id="PIRSF005384">
    <property type="entry name" value="RpiB_LacA_B"/>
    <property type="match status" value="1"/>
</dbReference>
<dbReference type="SUPFAM" id="SSF89623">
    <property type="entry name" value="Ribose/Galactose isomerase RpiB/AlsB"/>
    <property type="match status" value="1"/>
</dbReference>